<name>NUDC1_HUMAN</name>
<feature type="chain" id="PRO_0000307704" description="NudC domain-containing protein 1">
    <location>
        <begin position="1"/>
        <end position="583"/>
    </location>
</feature>
<feature type="domain" description="CS" evidence="1">
    <location>
        <begin position="273"/>
        <end position="361"/>
    </location>
</feature>
<feature type="modified residue" description="Phosphoserine" evidence="22">
    <location>
        <position position="8"/>
    </location>
</feature>
<feature type="modified residue" description="Phosphoserine" evidence="22">
    <location>
        <position position="388"/>
    </location>
</feature>
<feature type="splice variant" id="VSP_052557" description="In isoform 3." evidence="10 11">
    <location>
        <begin position="1"/>
        <end position="60"/>
    </location>
</feature>
<feature type="splice variant" id="VSP_052558" description="In isoform 2." evidence="9 12">
    <location>
        <begin position="1"/>
        <end position="29"/>
    </location>
</feature>
<feature type="splice variant" id="VSP_052559" description="In isoform 2." evidence="9 12">
    <original>LPCYQLELDA</original>
    <variation>MLYLQGWSMP</variation>
    <location>
        <begin position="30"/>
        <end position="39"/>
    </location>
</feature>
<feature type="splice variant" id="VSP_052560" description="In isoform 3." evidence="10 11">
    <original>YLHCDSWYQDSVYYIDTLGRIMNLTVML</original>
    <variation>Q</variation>
    <location>
        <begin position="64"/>
        <end position="91"/>
    </location>
</feature>
<feature type="sequence variant" id="VAR_036632" description="In dbSNP:rs2980619." evidence="2 3 4 5 6 7">
    <original>L</original>
    <variation>F</variation>
    <location>
        <position position="252"/>
    </location>
</feature>
<feature type="sequence variant" id="VAR_036633" description="In dbSNP:rs2980618." evidence="2 3 4 5 6 7">
    <original>I</original>
    <variation>V</variation>
    <location>
        <position position="269"/>
    </location>
</feature>
<feature type="sequence variant" id="VAR_036634" description="In dbSNP:rs34660136." evidence="5 6">
    <original>N</original>
    <variation>H</variation>
    <location>
        <position position="394"/>
    </location>
</feature>
<feature type="sequence variant" id="VAR_036635" description="In dbSNP:rs11550169." evidence="5 6">
    <original>N</original>
    <variation>S</variation>
    <location>
        <position position="426"/>
    </location>
</feature>
<feature type="sequence conflict" description="In Ref. 2; BAB55439." evidence="13" ref="2">
    <original>N</original>
    <variation>S</variation>
    <location>
        <position position="403"/>
    </location>
</feature>
<evidence type="ECO:0000255" key="1">
    <source>
        <dbReference type="PROSITE-ProRule" id="PRU00547"/>
    </source>
</evidence>
<evidence type="ECO:0000269" key="2">
    <source>
    </source>
</evidence>
<evidence type="ECO:0000269" key="3">
    <source>
    </source>
</evidence>
<evidence type="ECO:0000269" key="4">
    <source>
    </source>
</evidence>
<evidence type="ECO:0000269" key="5">
    <source>
    </source>
</evidence>
<evidence type="ECO:0000269" key="6">
    <source>
    </source>
</evidence>
<evidence type="ECO:0000269" key="7">
    <source ref="3"/>
</evidence>
<evidence type="ECO:0000303" key="8">
    <source>
    </source>
</evidence>
<evidence type="ECO:0000303" key="9">
    <source>
    </source>
</evidence>
<evidence type="ECO:0000303" key="10">
    <source>
    </source>
</evidence>
<evidence type="ECO:0000303" key="11">
    <source>
    </source>
</evidence>
<evidence type="ECO:0000303" key="12">
    <source ref="3"/>
</evidence>
<evidence type="ECO:0000305" key="13"/>
<evidence type="ECO:0000312" key="14">
    <source>
        <dbReference type="EMBL" id="AAH00967.2"/>
    </source>
</evidence>
<evidence type="ECO:0000312" key="15">
    <source>
        <dbReference type="EMBL" id="AAH31258.1"/>
    </source>
</evidence>
<evidence type="ECO:0000312" key="16">
    <source>
        <dbReference type="EMBL" id="AAH43406.1"/>
    </source>
</evidence>
<evidence type="ECO:0000312" key="17">
    <source>
        <dbReference type="EMBL" id="AAK73017.1"/>
    </source>
</evidence>
<evidence type="ECO:0000312" key="18">
    <source>
        <dbReference type="EMBL" id="AAM69373.1"/>
    </source>
</evidence>
<evidence type="ECO:0000312" key="19">
    <source>
        <dbReference type="EMBL" id="AAQ08823.1"/>
    </source>
</evidence>
<evidence type="ECO:0000312" key="20">
    <source>
        <dbReference type="EMBL" id="BAB55439.1"/>
    </source>
</evidence>
<evidence type="ECO:0000312" key="21">
    <source>
        <dbReference type="HGNC" id="HGNC:24306"/>
    </source>
</evidence>
<evidence type="ECO:0007744" key="22">
    <source>
    </source>
</evidence>
<protein>
    <recommendedName>
        <fullName>NudC domain-containing protein 1</fullName>
    </recommendedName>
    <alternativeName>
        <fullName>Chronic myelogenous leukemia tumor antigen 66</fullName>
    </alternativeName>
    <alternativeName>
        <fullName>Tumor antigen CML66</fullName>
    </alternativeName>
</protein>
<organism>
    <name type="scientific">Homo sapiens</name>
    <name type="common">Human</name>
    <dbReference type="NCBI Taxonomy" id="9606"/>
    <lineage>
        <taxon>Eukaryota</taxon>
        <taxon>Metazoa</taxon>
        <taxon>Chordata</taxon>
        <taxon>Craniata</taxon>
        <taxon>Vertebrata</taxon>
        <taxon>Euteleostomi</taxon>
        <taxon>Mammalia</taxon>
        <taxon>Eutheria</taxon>
        <taxon>Euarchontoglires</taxon>
        <taxon>Primates</taxon>
        <taxon>Haplorrhini</taxon>
        <taxon>Catarrhini</taxon>
        <taxon>Hominidae</taxon>
        <taxon>Homo</taxon>
    </lineage>
</organism>
<reference evidence="13 17" key="1">
    <citation type="journal article" date="2001" name="Proc. Natl. Acad. Sci. U.S.A.">
        <title>CML66, a broadly immunogenic tumor antigen, elicits a humoral immune response associated with remission of chronic myelogenous leukemia.</title>
        <authorList>
            <person name="Yang X.-F."/>
            <person name="Wu C.J."/>
            <person name="McLaughlin S."/>
            <person name="Chillemi A."/>
            <person name="Wang K.S."/>
            <person name="Canning C."/>
            <person name="Alyea E.P."/>
            <person name="Kantoff P."/>
            <person name="Soiffer R.J."/>
            <person name="Dranoff G."/>
            <person name="Ritz J."/>
        </authorList>
    </citation>
    <scope>NUCLEOTIDE SEQUENCE [MRNA] (ISOFORM 1)</scope>
    <scope>TISSUE SPECIFICITY</scope>
    <scope>MISCELLANEOUS</scope>
    <scope>VARIANTS PHE-252 AND VAL-269</scope>
    <source>
        <tissue evidence="17">Testis</tissue>
    </source>
</reference>
<reference evidence="13 19" key="2">
    <citation type="journal article" date="2004" name="J. Immunol.">
        <title>A novel mechanism of alternative promoter and splicing regulates the epitope generation of tumor antigen CML66-L.</title>
        <authorList>
            <person name="Yan Y."/>
            <person name="Phan L."/>
            <person name="Yang F."/>
            <person name="Talpaz M."/>
            <person name="Yang Y."/>
            <person name="Xiong Z."/>
            <person name="Ng B."/>
            <person name="Timchenko N.A."/>
            <person name="Wu C.J."/>
            <person name="Ritz J."/>
            <person name="Wang H."/>
            <person name="Yang X.-F."/>
        </authorList>
    </citation>
    <scope>NUCLEOTIDE SEQUENCE [MRNA] (ISOFORM 2)</scope>
    <scope>TISSUE SPECIFICITY</scope>
    <scope>MISCELLANEOUS</scope>
    <scope>VARIANTS PHE-252 AND VAL-269</scope>
    <source>
        <tissue evidence="19">Testis</tissue>
    </source>
</reference>
<reference evidence="13 18" key="3">
    <citation type="submission" date="2000-06" db="EMBL/GenBank/DDBJ databases">
        <title>CML66, a novel tumor antigen elicits humoral immune response associated with remission of chronic myelogenous leukemia.</title>
        <authorList>
            <person name="Yang X.-F."/>
            <person name="Wu C.J."/>
            <person name="Ritz J."/>
        </authorList>
    </citation>
    <scope>NUCLEOTIDE SEQUENCE [MRNA] (ISOFORM 2)</scope>
    <scope>VARIANTS PHE-252 AND VAL-269</scope>
</reference>
<reference evidence="13 20" key="4">
    <citation type="journal article" date="2004" name="Nat. Genet.">
        <title>Complete sequencing and characterization of 21,243 full-length human cDNAs.</title>
        <authorList>
            <person name="Ota T."/>
            <person name="Suzuki Y."/>
            <person name="Nishikawa T."/>
            <person name="Otsuki T."/>
            <person name="Sugiyama T."/>
            <person name="Irie R."/>
            <person name="Wakamatsu A."/>
            <person name="Hayashi K."/>
            <person name="Sato H."/>
            <person name="Nagai K."/>
            <person name="Kimura K."/>
            <person name="Makita H."/>
            <person name="Sekine M."/>
            <person name="Obayashi M."/>
            <person name="Nishi T."/>
            <person name="Shibahara T."/>
            <person name="Tanaka T."/>
            <person name="Ishii S."/>
            <person name="Yamamoto J."/>
            <person name="Saito K."/>
            <person name="Kawai Y."/>
            <person name="Isono Y."/>
            <person name="Nakamura Y."/>
            <person name="Nagahari K."/>
            <person name="Murakami K."/>
            <person name="Yasuda T."/>
            <person name="Iwayanagi T."/>
            <person name="Wagatsuma M."/>
            <person name="Shiratori A."/>
            <person name="Sudo H."/>
            <person name="Hosoiri T."/>
            <person name="Kaku Y."/>
            <person name="Kodaira H."/>
            <person name="Kondo H."/>
            <person name="Sugawara M."/>
            <person name="Takahashi M."/>
            <person name="Kanda K."/>
            <person name="Yokoi T."/>
            <person name="Furuya T."/>
            <person name="Kikkawa E."/>
            <person name="Omura Y."/>
            <person name="Abe K."/>
            <person name="Kamihara K."/>
            <person name="Katsuta N."/>
            <person name="Sato K."/>
            <person name="Tanikawa M."/>
            <person name="Yamazaki M."/>
            <person name="Ninomiya K."/>
            <person name="Ishibashi T."/>
            <person name="Yamashita H."/>
            <person name="Murakawa K."/>
            <person name="Fujimori K."/>
            <person name="Tanai H."/>
            <person name="Kimata M."/>
            <person name="Watanabe M."/>
            <person name="Hiraoka S."/>
            <person name="Chiba Y."/>
            <person name="Ishida S."/>
            <person name="Ono Y."/>
            <person name="Takiguchi S."/>
            <person name="Watanabe S."/>
            <person name="Yosida M."/>
            <person name="Hotuta T."/>
            <person name="Kusano J."/>
            <person name="Kanehori K."/>
            <person name="Takahashi-Fujii A."/>
            <person name="Hara H."/>
            <person name="Tanase T.-O."/>
            <person name="Nomura Y."/>
            <person name="Togiya S."/>
            <person name="Komai F."/>
            <person name="Hara R."/>
            <person name="Takeuchi K."/>
            <person name="Arita M."/>
            <person name="Imose N."/>
            <person name="Musashino K."/>
            <person name="Yuuki H."/>
            <person name="Oshima A."/>
            <person name="Sasaki N."/>
            <person name="Aotsuka S."/>
            <person name="Yoshikawa Y."/>
            <person name="Matsunawa H."/>
            <person name="Ichihara T."/>
            <person name="Shiohata N."/>
            <person name="Sano S."/>
            <person name="Moriya S."/>
            <person name="Momiyama H."/>
            <person name="Satoh N."/>
            <person name="Takami S."/>
            <person name="Terashima Y."/>
            <person name="Suzuki O."/>
            <person name="Nakagawa S."/>
            <person name="Senoh A."/>
            <person name="Mizoguchi H."/>
            <person name="Goto Y."/>
            <person name="Shimizu F."/>
            <person name="Wakebe H."/>
            <person name="Hishigaki H."/>
            <person name="Watanabe T."/>
            <person name="Sugiyama A."/>
            <person name="Takemoto M."/>
            <person name="Kawakami B."/>
            <person name="Yamazaki M."/>
            <person name="Watanabe K."/>
            <person name="Kumagai A."/>
            <person name="Itakura S."/>
            <person name="Fukuzumi Y."/>
            <person name="Fujimori Y."/>
            <person name="Komiyama M."/>
            <person name="Tashiro H."/>
            <person name="Tanigami A."/>
            <person name="Fujiwara T."/>
            <person name="Ono T."/>
            <person name="Yamada K."/>
            <person name="Fujii Y."/>
            <person name="Ozaki K."/>
            <person name="Hirao M."/>
            <person name="Ohmori Y."/>
            <person name="Kawabata A."/>
            <person name="Hikiji T."/>
            <person name="Kobatake N."/>
            <person name="Inagaki H."/>
            <person name="Ikema Y."/>
            <person name="Okamoto S."/>
            <person name="Okitani R."/>
            <person name="Kawakami T."/>
            <person name="Noguchi S."/>
            <person name="Itoh T."/>
            <person name="Shigeta K."/>
            <person name="Senba T."/>
            <person name="Matsumura K."/>
            <person name="Nakajima Y."/>
            <person name="Mizuno T."/>
            <person name="Morinaga M."/>
            <person name="Sasaki M."/>
            <person name="Togashi T."/>
            <person name="Oyama M."/>
            <person name="Hata H."/>
            <person name="Watanabe M."/>
            <person name="Komatsu T."/>
            <person name="Mizushima-Sugano J."/>
            <person name="Satoh T."/>
            <person name="Shirai Y."/>
            <person name="Takahashi Y."/>
            <person name="Nakagawa K."/>
            <person name="Okumura K."/>
            <person name="Nagase T."/>
            <person name="Nomura N."/>
            <person name="Kikuchi H."/>
            <person name="Masuho Y."/>
            <person name="Yamashita R."/>
            <person name="Nakai K."/>
            <person name="Yada T."/>
            <person name="Nakamura Y."/>
            <person name="Ohara O."/>
            <person name="Isogai T."/>
            <person name="Sugano S."/>
        </authorList>
    </citation>
    <scope>NUCLEOTIDE SEQUENCE [LARGE SCALE MRNA] (ISOFORMS 1 AND 3)</scope>
    <source>
        <tissue evidence="20">Retinoblastoma</tissue>
        <tissue>Spleen</tissue>
    </source>
</reference>
<reference key="5">
    <citation type="journal article" date="2006" name="Nature">
        <title>DNA sequence and analysis of human chromosome 8.</title>
        <authorList>
            <person name="Nusbaum C."/>
            <person name="Mikkelsen T.S."/>
            <person name="Zody M.C."/>
            <person name="Asakawa S."/>
            <person name="Taudien S."/>
            <person name="Garber M."/>
            <person name="Kodira C.D."/>
            <person name="Schueler M.G."/>
            <person name="Shimizu A."/>
            <person name="Whittaker C.A."/>
            <person name="Chang J.L."/>
            <person name="Cuomo C.A."/>
            <person name="Dewar K."/>
            <person name="FitzGerald M.G."/>
            <person name="Yang X."/>
            <person name="Allen N.R."/>
            <person name="Anderson S."/>
            <person name="Asakawa T."/>
            <person name="Blechschmidt K."/>
            <person name="Bloom T."/>
            <person name="Borowsky M.L."/>
            <person name="Butler J."/>
            <person name="Cook A."/>
            <person name="Corum B."/>
            <person name="DeArellano K."/>
            <person name="DeCaprio D."/>
            <person name="Dooley K.T."/>
            <person name="Dorris L. III"/>
            <person name="Engels R."/>
            <person name="Gloeckner G."/>
            <person name="Hafez N."/>
            <person name="Hagopian D.S."/>
            <person name="Hall J.L."/>
            <person name="Ishikawa S.K."/>
            <person name="Jaffe D.B."/>
            <person name="Kamat A."/>
            <person name="Kudoh J."/>
            <person name="Lehmann R."/>
            <person name="Lokitsang T."/>
            <person name="Macdonald P."/>
            <person name="Major J.E."/>
            <person name="Matthews C.D."/>
            <person name="Mauceli E."/>
            <person name="Menzel U."/>
            <person name="Mihalev A.H."/>
            <person name="Minoshima S."/>
            <person name="Murayama Y."/>
            <person name="Naylor J.W."/>
            <person name="Nicol R."/>
            <person name="Nguyen C."/>
            <person name="O'Leary S.B."/>
            <person name="O'Neill K."/>
            <person name="Parker S.C.J."/>
            <person name="Polley A."/>
            <person name="Raymond C.K."/>
            <person name="Reichwald K."/>
            <person name="Rodriguez J."/>
            <person name="Sasaki T."/>
            <person name="Schilhabel M."/>
            <person name="Siddiqui R."/>
            <person name="Smith C.L."/>
            <person name="Sneddon T.P."/>
            <person name="Talamas J.A."/>
            <person name="Tenzin P."/>
            <person name="Topham K."/>
            <person name="Venkataraman V."/>
            <person name="Wen G."/>
            <person name="Yamazaki S."/>
            <person name="Young S.K."/>
            <person name="Zeng Q."/>
            <person name="Zimmer A.R."/>
            <person name="Rosenthal A."/>
            <person name="Birren B.W."/>
            <person name="Platzer M."/>
            <person name="Shimizu N."/>
            <person name="Lander E.S."/>
        </authorList>
    </citation>
    <scope>NUCLEOTIDE SEQUENCE [LARGE SCALE GENOMIC DNA]</scope>
</reference>
<reference evidence="13 16" key="6">
    <citation type="journal article" date="2004" name="Genome Res.">
        <title>The status, quality, and expansion of the NIH full-length cDNA project: the Mammalian Gene Collection (MGC).</title>
        <authorList>
            <consortium name="The MGC Project Team"/>
        </authorList>
    </citation>
    <scope>NUCLEOTIDE SEQUENCE [LARGE SCALE MRNA] (ISOFORMS 1 AND 3)</scope>
    <scope>VARIANTS PHE-252; HIS-394 AND SER-426</scope>
    <source>
        <tissue evidence="16">Lung</tissue>
        <tissue evidence="14">Placenta</tissue>
        <tissue evidence="15">Testis</tissue>
    </source>
</reference>
<reference key="7">
    <citation type="journal article" date="2007" name="BMC Genomics">
        <title>The full-ORF clone resource of the German cDNA consortium.</title>
        <authorList>
            <person name="Bechtel S."/>
            <person name="Rosenfelder H."/>
            <person name="Duda A."/>
            <person name="Schmidt C.P."/>
            <person name="Ernst U."/>
            <person name="Wellenreuther R."/>
            <person name="Mehrle A."/>
            <person name="Schuster C."/>
            <person name="Bahr A."/>
            <person name="Bloecker H."/>
            <person name="Heubner D."/>
            <person name="Hoerlein A."/>
            <person name="Michel G."/>
            <person name="Wedler H."/>
            <person name="Koehrer K."/>
            <person name="Ottenwaelder B."/>
            <person name="Poustka A."/>
            <person name="Wiemann S."/>
            <person name="Schupp I."/>
        </authorList>
    </citation>
    <scope>NUCLEOTIDE SEQUENCE [LARGE SCALE MRNA] OF 195-583</scope>
    <scope>VARIANTS PHE-252; VAL-269; HIS-394 AND SER-426</scope>
    <source>
        <tissue>Brain</tissue>
    </source>
</reference>
<reference key="8">
    <citation type="journal article" date="2011" name="BMC Syst. Biol.">
        <title>Initial characterization of the human central proteome.</title>
        <authorList>
            <person name="Burkard T.R."/>
            <person name="Planyavsky M."/>
            <person name="Kaupe I."/>
            <person name="Breitwieser F.P."/>
            <person name="Buerckstuemmer T."/>
            <person name="Bennett K.L."/>
            <person name="Superti-Furga G."/>
            <person name="Colinge J."/>
        </authorList>
    </citation>
    <scope>IDENTIFICATION BY MASS SPECTROMETRY [LARGE SCALE ANALYSIS]</scope>
</reference>
<reference key="9">
    <citation type="journal article" date="2012" name="Mol. Cell. Proteomics">
        <title>Systematic analysis of protein pools, isoforms, and modifications affecting turnover and subcellular localization.</title>
        <authorList>
            <person name="Ahmad Y."/>
            <person name="Boisvert F.M."/>
            <person name="Lundberg E."/>
            <person name="Uhlen M."/>
            <person name="Lamond A.I."/>
        </authorList>
    </citation>
    <scope>SUBCELLULAR LOCATION</scope>
</reference>
<reference key="10">
    <citation type="journal article" date="2012" name="Proc. Natl. Acad. Sci. U.S.A.">
        <title>N-terminal acetylome analyses and functional insights of the N-terminal acetyltransferase NatB.</title>
        <authorList>
            <person name="Van Damme P."/>
            <person name="Lasa M."/>
            <person name="Polevoda B."/>
            <person name="Gazquez C."/>
            <person name="Elosegui-Artola A."/>
            <person name="Kim D.S."/>
            <person name="De Juan-Pardo E."/>
            <person name="Demeyer K."/>
            <person name="Hole K."/>
            <person name="Larrea E."/>
            <person name="Timmerman E."/>
            <person name="Prieto J."/>
            <person name="Arnesen T."/>
            <person name="Sherman F."/>
            <person name="Gevaert K."/>
            <person name="Aldabe R."/>
        </authorList>
    </citation>
    <scope>IDENTIFICATION BY MASS SPECTROMETRY [LARGE SCALE ANALYSIS]</scope>
</reference>
<reference key="11">
    <citation type="journal article" date="2013" name="J. Proteome Res.">
        <title>Toward a comprehensive characterization of a human cancer cell phosphoproteome.</title>
        <authorList>
            <person name="Zhou H."/>
            <person name="Di Palma S."/>
            <person name="Preisinger C."/>
            <person name="Peng M."/>
            <person name="Polat A.N."/>
            <person name="Heck A.J."/>
            <person name="Mohammed S."/>
        </authorList>
    </citation>
    <scope>PHOSPHORYLATION [LARGE SCALE ANALYSIS] AT SER-8 AND SER-388</scope>
    <scope>IDENTIFICATION BY MASS SPECTROMETRY [LARGE SCALE ANALYSIS]</scope>
    <source>
        <tissue>Cervix carcinoma</tissue>
        <tissue>Erythroleukemia</tissue>
    </source>
</reference>
<comment type="interaction">
    <interactant intactId="EBI-2512429">
        <id>Q96RS6</id>
    </interactant>
    <interactant intactId="EBI-359063">
        <id>P53618</id>
        <label>COPB1</label>
    </interactant>
    <organismsDiffer>false</organismsDiffer>
    <experiments>3</experiments>
</comment>
<comment type="interaction">
    <interactant intactId="EBI-2512429">
        <id>Q96RS6</id>
    </interactant>
    <interactant intactId="EBI-1049127">
        <id>Q9Y678</id>
        <label>COPG1</label>
    </interactant>
    <organismsDiffer>false</organismsDiffer>
    <experiments>4</experiments>
</comment>
<comment type="interaction">
    <interactant intactId="EBI-2512429">
        <id>Q96RS6</id>
    </interactant>
    <interactant intactId="EBI-1043041">
        <id>Q92620</id>
        <label>DHX38</label>
    </interactant>
    <organismsDiffer>false</organismsDiffer>
    <experiments>4</experiments>
</comment>
<comment type="interaction">
    <interactant intactId="EBI-20724008">
        <id>Q96RS6-1</id>
    </interactant>
    <interactant intactId="EBI-1237044">
        <id>O43143</id>
        <label>DHX15</label>
    </interactant>
    <organismsDiffer>false</organismsDiffer>
    <experiments>2</experiments>
</comment>
<comment type="subcellular location">
    <molecule>Isoform 1</molecule>
    <subcellularLocation>
        <location>Cytoplasm</location>
    </subcellularLocation>
    <subcellularLocation>
        <location>Nucleus</location>
    </subcellularLocation>
</comment>
<comment type="subcellular location">
    <molecule>Isoform 2</molecule>
    <subcellularLocation>
        <location>Cytoplasm</location>
    </subcellularLocation>
</comment>
<comment type="subcellular location">
    <molecule>Isoform 3</molecule>
    <subcellularLocation>
        <location>Cytoplasm</location>
    </subcellularLocation>
    <subcellularLocation>
        <location>Nucleus</location>
    </subcellularLocation>
</comment>
<comment type="alternative products">
    <event type="alternative splicing"/>
    <isoform>
        <id>Q96RS6-1</id>
        <name evidence="2 4">1</name>
        <name evidence="3">CML66-L</name>
        <sequence type="displayed"/>
    </isoform>
    <isoform>
        <id>Q96RS6-2</id>
        <name evidence="3 7">2</name>
        <name evidence="3">CML66-S</name>
        <sequence type="described" ref="VSP_052558 VSP_052559"/>
    </isoform>
    <isoform>
        <id>Q96RS6-3</id>
        <name evidence="5">3</name>
        <sequence type="described" ref="VSP_052557 VSP_052560"/>
    </isoform>
</comment>
<comment type="tissue specificity">
    <text evidence="2 3">Isoform 1 is specifically expressed in leukemias and a variety of solid tumor cell lines and is also detected in testis and heart. Isoform 2 is predominantly expressed in testis and weakly expressed in tumor cells.</text>
</comment>
<comment type="miscellaneous">
    <text evidence="2 3">Isoform 1 is the dominant immunogenic isoform and is capable of eliciting a humoral response in individuals with a variety of solid tumors. Expression of isoform 1 in a wide variety of malignancies as well as the presence of an immunogenic epitope suggest that it may be a suitable target for antigen-specific immunotherapy.</text>
</comment>
<comment type="miscellaneous">
    <molecule>Isoform 3</molecule>
    <text evidence="13">May be produced at very low levels due to a premature stop codon in the mRNA, leading to nonsense-mediated mRNA decay.</text>
</comment>
<gene>
    <name evidence="21" type="primary">NUDCD1</name>
    <name evidence="8" type="synonym">CML66</name>
</gene>
<keyword id="KW-0025">Alternative splicing</keyword>
<keyword id="KW-0963">Cytoplasm</keyword>
<keyword id="KW-0391">Immunity</keyword>
<keyword id="KW-0539">Nucleus</keyword>
<keyword id="KW-0597">Phosphoprotein</keyword>
<keyword id="KW-1267">Proteomics identification</keyword>
<keyword id="KW-1185">Reference proteome</keyword>
<keyword id="KW-0825">Tumor antigen</keyword>
<sequence>MEVAANCSLRVKRPLLDPRFEGYKLSLEPLPCYQLELDAAVAEVKLRDDQYTLEHMHAFGMYNYLHCDSWYQDSVYYIDTLGRIMNLTVMLDTALGKPREVFRLPTDLTACDNRLCASIHFSSSTWVTLSDGTGRLYVIGTGERGNSASEKWEIMFNEELGDPFIIIHSISLLNAEEHSIATLLLRIEKEELDMKGSGFYVSLEWVTISKKNQDNKKYEIIKRDILRGKSVPHYAAIEPDGNGLMIVSYKSLTFVQAGQDLEENMDEDISEKIKEPLYYWQQTEDDLTVTIRLPEDSTKEDIQIQFLPDHINIVLKDHQFLEGKLYSSIDHESSTWIIKESNSLEISLIKKNEGLTWPELVIGDKQGELIRDSAQCAAIAERLMHLTSEELNPNPDKEKPPCNAQELEECDIFFEESSSLCRFDGNTLKTTHVVNLGSNQYLFSVIVDPKEMPCFCLRHDVDALLWQPHSSKQDDMWEHIATFNALGYVQASKRDKKFFACAPNYSYAALCECLRRVFIYRQPAPMSTVLYNRKEGRQVGQVAKQQVASLETNDPILGFQATNERLFVLTTKNLFLIKVNTEN</sequence>
<proteinExistence type="evidence at protein level"/>
<accession>Q96RS6</accession>
<accession>B4DVX6</accession>
<accession>Q4G130</accession>
<accession>Q8NDQ5</accession>
<accession>Q8NG18</accession>
<accession>Q96SI4</accession>
<accession>Q9BVR5</accession>
<dbReference type="EMBL" id="AF283301">
    <property type="protein sequence ID" value="AAK73017.1"/>
    <property type="molecule type" value="mRNA"/>
</dbReference>
<dbReference type="EMBL" id="AF521133">
    <property type="protein sequence ID" value="AAQ08823.1"/>
    <property type="molecule type" value="mRNA"/>
</dbReference>
<dbReference type="EMBL" id="AF283302">
    <property type="protein sequence ID" value="AAM69373.1"/>
    <property type="molecule type" value="mRNA"/>
</dbReference>
<dbReference type="EMBL" id="AK027897">
    <property type="protein sequence ID" value="BAB55439.1"/>
    <property type="molecule type" value="mRNA"/>
</dbReference>
<dbReference type="EMBL" id="AK301278">
    <property type="protein sequence ID" value="BAG62838.1"/>
    <property type="molecule type" value="mRNA"/>
</dbReference>
<dbReference type="EMBL" id="AC021237">
    <property type="status" value="NOT_ANNOTATED_CDS"/>
    <property type="molecule type" value="Genomic_DNA"/>
</dbReference>
<dbReference type="EMBL" id="BC000967">
    <property type="protein sequence ID" value="AAH00967.2"/>
    <property type="molecule type" value="mRNA"/>
</dbReference>
<dbReference type="EMBL" id="BC031258">
    <property type="protein sequence ID" value="AAH31258.1"/>
    <property type="molecule type" value="mRNA"/>
</dbReference>
<dbReference type="EMBL" id="BC043406">
    <property type="protein sequence ID" value="AAH43406.1"/>
    <property type="molecule type" value="mRNA"/>
</dbReference>
<dbReference type="EMBL" id="AL832317">
    <property type="protein sequence ID" value="CAD38612.1"/>
    <property type="molecule type" value="mRNA"/>
</dbReference>
<dbReference type="CCDS" id="CCDS47910.1">
    <molecule id="Q96RS6-2"/>
</dbReference>
<dbReference type="CCDS" id="CCDS6312.1">
    <molecule id="Q96RS6-1"/>
</dbReference>
<dbReference type="RefSeq" id="NP_001121683.1">
    <molecule id="Q96RS6-2"/>
    <property type="nucleotide sequence ID" value="NM_001128211.2"/>
</dbReference>
<dbReference type="RefSeq" id="NP_116258.2">
    <molecule id="Q96RS6-1"/>
    <property type="nucleotide sequence ID" value="NM_032869.4"/>
</dbReference>
<dbReference type="RefSeq" id="XP_016869399.1">
    <property type="nucleotide sequence ID" value="XM_017013910.1"/>
</dbReference>
<dbReference type="RefSeq" id="XP_016869400.1">
    <property type="nucleotide sequence ID" value="XM_017013911.1"/>
</dbReference>
<dbReference type="RefSeq" id="XP_047278286.1">
    <molecule id="Q96RS6-3"/>
    <property type="nucleotide sequence ID" value="XM_047422330.1"/>
</dbReference>
<dbReference type="RefSeq" id="XP_054217353.1">
    <molecule id="Q96RS6-3"/>
    <property type="nucleotide sequence ID" value="XM_054361378.1"/>
</dbReference>
<dbReference type="SMR" id="Q96RS6"/>
<dbReference type="BioGRID" id="124387">
    <property type="interactions" value="65"/>
</dbReference>
<dbReference type="FunCoup" id="Q96RS6">
    <property type="interactions" value="3944"/>
</dbReference>
<dbReference type="IntAct" id="Q96RS6">
    <property type="interactions" value="256"/>
</dbReference>
<dbReference type="MINT" id="Q96RS6"/>
<dbReference type="STRING" id="9606.ENSP00000239690"/>
<dbReference type="GlyGen" id="Q96RS6">
    <property type="glycosylation" value="2 sites, 1 N-linked glycan (1 site), 1 O-linked glycan (1 site)"/>
</dbReference>
<dbReference type="iPTMnet" id="Q96RS6"/>
<dbReference type="MetOSite" id="Q96RS6"/>
<dbReference type="PhosphoSitePlus" id="Q96RS6"/>
<dbReference type="BioMuta" id="NUDCD1"/>
<dbReference type="DMDM" id="296439243"/>
<dbReference type="jPOST" id="Q96RS6"/>
<dbReference type="MassIVE" id="Q96RS6"/>
<dbReference type="PaxDb" id="9606-ENSP00000239690"/>
<dbReference type="PeptideAtlas" id="Q96RS6"/>
<dbReference type="ProteomicsDB" id="78018">
    <molecule id="Q96RS6-1"/>
</dbReference>
<dbReference type="ProteomicsDB" id="78019">
    <molecule id="Q96RS6-2"/>
</dbReference>
<dbReference type="ProteomicsDB" id="78020">
    <molecule id="Q96RS6-3"/>
</dbReference>
<dbReference type="Pumba" id="Q96RS6"/>
<dbReference type="Antibodypedia" id="13450">
    <property type="antibodies" value="111 antibodies from 22 providers"/>
</dbReference>
<dbReference type="DNASU" id="84955"/>
<dbReference type="Ensembl" id="ENST00000239690.9">
    <molecule id="Q96RS6-1"/>
    <property type="protein sequence ID" value="ENSP00000239690.4"/>
    <property type="gene ID" value="ENSG00000120526.12"/>
</dbReference>
<dbReference type="Ensembl" id="ENST00000427660.6">
    <molecule id="Q96RS6-2"/>
    <property type="protein sequence ID" value="ENSP00000410707.2"/>
    <property type="gene ID" value="ENSG00000120526.12"/>
</dbReference>
<dbReference type="GeneID" id="84955"/>
<dbReference type="KEGG" id="hsa:84955"/>
<dbReference type="MANE-Select" id="ENST00000239690.9">
    <property type="protein sequence ID" value="ENSP00000239690.4"/>
    <property type="RefSeq nucleotide sequence ID" value="NM_032869.4"/>
    <property type="RefSeq protein sequence ID" value="NP_116258.2"/>
</dbReference>
<dbReference type="UCSC" id="uc003yna.4">
    <molecule id="Q96RS6-1"/>
    <property type="organism name" value="human"/>
</dbReference>
<dbReference type="AGR" id="HGNC:24306"/>
<dbReference type="CTD" id="84955"/>
<dbReference type="DisGeNET" id="84955"/>
<dbReference type="GeneCards" id="NUDCD1"/>
<dbReference type="HGNC" id="HGNC:24306">
    <property type="gene designation" value="NUDCD1"/>
</dbReference>
<dbReference type="HPA" id="ENSG00000120526">
    <property type="expression patterns" value="Low tissue specificity"/>
</dbReference>
<dbReference type="MIM" id="606109">
    <property type="type" value="gene"/>
</dbReference>
<dbReference type="neXtProt" id="NX_Q96RS6"/>
<dbReference type="OpenTargets" id="ENSG00000120526"/>
<dbReference type="PharmGKB" id="PA134985670"/>
<dbReference type="VEuPathDB" id="HostDB:ENSG00000120526"/>
<dbReference type="eggNOG" id="KOG4379">
    <property type="taxonomic scope" value="Eukaryota"/>
</dbReference>
<dbReference type="GeneTree" id="ENSGT00390000007776"/>
<dbReference type="HOGENOM" id="CLU_021010_1_0_1"/>
<dbReference type="InParanoid" id="Q96RS6"/>
<dbReference type="OMA" id="DTRFVHH"/>
<dbReference type="OrthoDB" id="428655at2759"/>
<dbReference type="PAN-GO" id="Q96RS6">
    <property type="GO annotations" value="0 GO annotations based on evolutionary models"/>
</dbReference>
<dbReference type="PhylomeDB" id="Q96RS6"/>
<dbReference type="TreeFam" id="TF323350"/>
<dbReference type="PathwayCommons" id="Q96RS6"/>
<dbReference type="SignaLink" id="Q96RS6"/>
<dbReference type="BioGRID-ORCS" id="84955">
    <property type="hits" value="28 hits in 1161 CRISPR screens"/>
</dbReference>
<dbReference type="ChiTaRS" id="NUDCD1">
    <property type="organism name" value="human"/>
</dbReference>
<dbReference type="GenomeRNAi" id="84955"/>
<dbReference type="Pharos" id="Q96RS6">
    <property type="development level" value="Tbio"/>
</dbReference>
<dbReference type="PRO" id="PR:Q96RS6"/>
<dbReference type="Proteomes" id="UP000005640">
    <property type="component" value="Chromosome 8"/>
</dbReference>
<dbReference type="RNAct" id="Q96RS6">
    <property type="molecule type" value="protein"/>
</dbReference>
<dbReference type="Bgee" id="ENSG00000120526">
    <property type="expression patterns" value="Expressed in secondary oocyte and 180 other cell types or tissues"/>
</dbReference>
<dbReference type="ExpressionAtlas" id="Q96RS6">
    <property type="expression patterns" value="baseline and differential"/>
</dbReference>
<dbReference type="GO" id="GO:0005829">
    <property type="term" value="C:cytosol"/>
    <property type="evidence" value="ECO:0000314"/>
    <property type="project" value="HPA"/>
</dbReference>
<dbReference type="GO" id="GO:0005654">
    <property type="term" value="C:nucleoplasm"/>
    <property type="evidence" value="ECO:0000314"/>
    <property type="project" value="HPA"/>
</dbReference>
<dbReference type="GO" id="GO:0002376">
    <property type="term" value="P:immune system process"/>
    <property type="evidence" value="ECO:0007669"/>
    <property type="project" value="UniProtKB-KW"/>
</dbReference>
<dbReference type="CDD" id="cd06493">
    <property type="entry name" value="p23_NUDCD1_like"/>
    <property type="match status" value="1"/>
</dbReference>
<dbReference type="FunFam" id="2.60.40.790:FF:000032">
    <property type="entry name" value="NudC domain containing 1"/>
    <property type="match status" value="1"/>
</dbReference>
<dbReference type="Gene3D" id="2.60.40.790">
    <property type="match status" value="1"/>
</dbReference>
<dbReference type="InterPro" id="IPR007052">
    <property type="entry name" value="CS_dom"/>
</dbReference>
<dbReference type="InterPro" id="IPR008978">
    <property type="entry name" value="HSP20-like_chaperone"/>
</dbReference>
<dbReference type="InterPro" id="IPR037895">
    <property type="entry name" value="NUDCD1"/>
</dbReference>
<dbReference type="PANTHER" id="PTHR21664">
    <property type="entry name" value="CHRONIC MYELOGENOUS LEUKEMIA TUMOR ANTIGEN 66"/>
    <property type="match status" value="1"/>
</dbReference>
<dbReference type="PANTHER" id="PTHR21664:SF1">
    <property type="entry name" value="NUDC DOMAIN-CONTAINING PROTEIN 1"/>
    <property type="match status" value="1"/>
</dbReference>
<dbReference type="Pfam" id="PF04969">
    <property type="entry name" value="CS"/>
    <property type="match status" value="1"/>
</dbReference>
<dbReference type="SUPFAM" id="SSF49764">
    <property type="entry name" value="HSP20-like chaperones"/>
    <property type="match status" value="1"/>
</dbReference>
<dbReference type="PROSITE" id="PS51203">
    <property type="entry name" value="CS"/>
    <property type="match status" value="1"/>
</dbReference>